<protein>
    <recommendedName>
        <fullName evidence="2">Small ribosomal subunit protein uS7cz/uS7cy</fullName>
    </recommendedName>
    <alternativeName>
        <fullName>30S ribosomal protein S7, plastid</fullName>
    </alternativeName>
</protein>
<organism>
    <name type="scientific">Cuscuta exaltata</name>
    <name type="common">Tall dodder</name>
    <dbReference type="NCBI Taxonomy" id="476139"/>
    <lineage>
        <taxon>Eukaryota</taxon>
        <taxon>Viridiplantae</taxon>
        <taxon>Streptophyta</taxon>
        <taxon>Embryophyta</taxon>
        <taxon>Tracheophyta</taxon>
        <taxon>Spermatophyta</taxon>
        <taxon>Magnoliopsida</taxon>
        <taxon>eudicotyledons</taxon>
        <taxon>Gunneridae</taxon>
        <taxon>Pentapetalae</taxon>
        <taxon>asterids</taxon>
        <taxon>lamiids</taxon>
        <taxon>Solanales</taxon>
        <taxon>Convolvulaceae</taxon>
        <taxon>Cuscuteae</taxon>
        <taxon>Cuscuta</taxon>
        <taxon>Cuscuta subgen. Monogynella</taxon>
    </lineage>
</organism>
<geneLocation type="plastid"/>
<evidence type="ECO:0000250" key="1"/>
<evidence type="ECO:0000255" key="2">
    <source>
        <dbReference type="HAMAP-Rule" id="MF_00480"/>
    </source>
</evidence>
<evidence type="ECO:0000305" key="3"/>
<reference key="1">
    <citation type="journal article" date="2007" name="BMC Plant Biol.">
        <title>Complete plastid genome sequences suggest strong selection for retention of photosynthetic genes in the parasitic plant genus Cuscuta.</title>
        <authorList>
            <person name="McNeal J.R."/>
            <person name="Kuehl J.V."/>
            <person name="Boore J.L."/>
            <person name="dePamphilis C.W."/>
        </authorList>
    </citation>
    <scope>NUCLEOTIDE SEQUENCE [LARGE SCALE GENOMIC DNA]</scope>
</reference>
<feature type="chain" id="PRO_0000344334" description="Small ribosomal subunit protein uS7cz/uS7cy">
    <location>
        <begin position="1"/>
        <end position="155"/>
    </location>
</feature>
<keyword id="KW-0934">Plastid</keyword>
<keyword id="KW-0687">Ribonucleoprotein</keyword>
<keyword id="KW-0689">Ribosomal protein</keyword>
<keyword id="KW-0694">RNA-binding</keyword>
<keyword id="KW-0699">rRNA-binding</keyword>
<dbReference type="EMBL" id="EU189132">
    <property type="protein sequence ID" value="ABW83735.1"/>
    <property type="molecule type" value="Genomic_DNA"/>
</dbReference>
<dbReference type="EMBL" id="EU189132">
    <property type="protein sequence ID" value="ABW83742.1"/>
    <property type="molecule type" value="Genomic_DNA"/>
</dbReference>
<dbReference type="SMR" id="A8W3G4"/>
<dbReference type="GO" id="GO:0009536">
    <property type="term" value="C:plastid"/>
    <property type="evidence" value="ECO:0007669"/>
    <property type="project" value="UniProtKB-SubCell"/>
</dbReference>
<dbReference type="GO" id="GO:0015935">
    <property type="term" value="C:small ribosomal subunit"/>
    <property type="evidence" value="ECO:0007669"/>
    <property type="project" value="InterPro"/>
</dbReference>
<dbReference type="GO" id="GO:0019843">
    <property type="term" value="F:rRNA binding"/>
    <property type="evidence" value="ECO:0007669"/>
    <property type="project" value="UniProtKB-KW"/>
</dbReference>
<dbReference type="GO" id="GO:0003735">
    <property type="term" value="F:structural constituent of ribosome"/>
    <property type="evidence" value="ECO:0007669"/>
    <property type="project" value="InterPro"/>
</dbReference>
<dbReference type="GO" id="GO:0006412">
    <property type="term" value="P:translation"/>
    <property type="evidence" value="ECO:0007669"/>
    <property type="project" value="InterPro"/>
</dbReference>
<dbReference type="CDD" id="cd14871">
    <property type="entry name" value="uS7_Chloroplast"/>
    <property type="match status" value="1"/>
</dbReference>
<dbReference type="FunFam" id="1.10.455.10:FF:000001">
    <property type="entry name" value="30S ribosomal protein S7"/>
    <property type="match status" value="1"/>
</dbReference>
<dbReference type="Gene3D" id="1.10.455.10">
    <property type="entry name" value="Ribosomal protein S7 domain"/>
    <property type="match status" value="1"/>
</dbReference>
<dbReference type="HAMAP" id="MF_00480_B">
    <property type="entry name" value="Ribosomal_uS7_B"/>
    <property type="match status" value="1"/>
</dbReference>
<dbReference type="InterPro" id="IPR000235">
    <property type="entry name" value="Ribosomal_uS7"/>
</dbReference>
<dbReference type="InterPro" id="IPR005717">
    <property type="entry name" value="Ribosomal_uS7_bac/org-type"/>
</dbReference>
<dbReference type="InterPro" id="IPR020606">
    <property type="entry name" value="Ribosomal_uS7_CS"/>
</dbReference>
<dbReference type="InterPro" id="IPR023798">
    <property type="entry name" value="Ribosomal_uS7_dom"/>
</dbReference>
<dbReference type="InterPro" id="IPR036823">
    <property type="entry name" value="Ribosomal_uS7_dom_sf"/>
</dbReference>
<dbReference type="NCBIfam" id="TIGR01029">
    <property type="entry name" value="rpsG_bact"/>
    <property type="match status" value="1"/>
</dbReference>
<dbReference type="PANTHER" id="PTHR11205">
    <property type="entry name" value="RIBOSOMAL PROTEIN S7"/>
    <property type="match status" value="1"/>
</dbReference>
<dbReference type="Pfam" id="PF00177">
    <property type="entry name" value="Ribosomal_S7"/>
    <property type="match status" value="1"/>
</dbReference>
<dbReference type="PIRSF" id="PIRSF002122">
    <property type="entry name" value="RPS7p_RPS7a_RPS5e_RPS7o"/>
    <property type="match status" value="1"/>
</dbReference>
<dbReference type="SUPFAM" id="SSF47973">
    <property type="entry name" value="Ribosomal protein S7"/>
    <property type="match status" value="1"/>
</dbReference>
<dbReference type="PROSITE" id="PS00052">
    <property type="entry name" value="RIBOSOMAL_S7"/>
    <property type="match status" value="1"/>
</dbReference>
<accession>A8W3G4</accession>
<name>RR7_CUSEX</name>
<sequence length="155" mass="17435">MSRRGTAEKKTAKYDPIYRNRLVNMLVNRILKHGKKSLAYQIIYRAVKKIQQKTETNPLSVLRQAIRGVTPDITVKARRVGGSTHQVPVEIGSTQGKALAVRWLLAASRKRPGRDMAFKLSSELVDAAKGSGDAIRKKEETHRMAEANRAFAHFR</sequence>
<comment type="function">
    <text evidence="1">One of the primary rRNA binding proteins, it binds directly to 16S rRNA where it nucleates assembly of the head domain of the 30S subunit.</text>
</comment>
<comment type="subunit">
    <text evidence="1">Part of the 30S ribosomal subunit.</text>
</comment>
<comment type="subcellular location">
    <subcellularLocation>
        <location>Plastid</location>
    </subcellularLocation>
</comment>
<comment type="similarity">
    <text evidence="3">Belongs to the universal ribosomal protein uS7 family.</text>
</comment>
<comment type="caution">
    <text evidence="3">Young tissue from this organism is photosynthetic and contains some thylakoids, although the photosynthetic activity does not exceed the light compensation point.</text>
</comment>
<proteinExistence type="inferred from homology"/>
<gene>
    <name type="primary">rps7-A</name>
</gene>
<gene>
    <name type="primary">rps7-B</name>
</gene>